<name>GGLO6_ARATH</name>
<feature type="signal peptide" evidence="2">
    <location>
        <begin position="1"/>
        <end position="35"/>
    </location>
</feature>
<feature type="chain" id="PRO_0000432507" description="Probable L-gulonolactone oxidase 6" evidence="2">
    <location>
        <begin position="36"/>
        <end position="603"/>
    </location>
</feature>
<feature type="domain" description="FAD-binding PCMH-type" evidence="3">
    <location>
        <begin position="64"/>
        <end position="246"/>
    </location>
</feature>
<reference key="1">
    <citation type="journal article" date="1999" name="Nature">
        <title>Sequence and analysis of chromosome 2 of the plant Arabidopsis thaliana.</title>
        <authorList>
            <person name="Lin X."/>
            <person name="Kaul S."/>
            <person name="Rounsley S.D."/>
            <person name="Shea T.P."/>
            <person name="Benito M.-I."/>
            <person name="Town C.D."/>
            <person name="Fujii C.Y."/>
            <person name="Mason T.M."/>
            <person name="Bowman C.L."/>
            <person name="Barnstead M.E."/>
            <person name="Feldblyum T.V."/>
            <person name="Buell C.R."/>
            <person name="Ketchum K.A."/>
            <person name="Lee J.J."/>
            <person name="Ronning C.M."/>
            <person name="Koo H.L."/>
            <person name="Moffat K.S."/>
            <person name="Cronin L.A."/>
            <person name="Shen M."/>
            <person name="Pai G."/>
            <person name="Van Aken S."/>
            <person name="Umayam L."/>
            <person name="Tallon L.J."/>
            <person name="Gill J.E."/>
            <person name="Adams M.D."/>
            <person name="Carrera A.J."/>
            <person name="Creasy T.H."/>
            <person name="Goodman H.M."/>
            <person name="Somerville C.R."/>
            <person name="Copenhaver G.P."/>
            <person name="Preuss D."/>
            <person name="Nierman W.C."/>
            <person name="White O."/>
            <person name="Eisen J.A."/>
            <person name="Salzberg S.L."/>
            <person name="Fraser C.M."/>
            <person name="Venter J.C."/>
        </authorList>
    </citation>
    <scope>NUCLEOTIDE SEQUENCE [LARGE SCALE GENOMIC DNA]</scope>
    <source>
        <strain>cv. Columbia</strain>
    </source>
</reference>
<reference key="2">
    <citation type="journal article" date="2017" name="Plant J.">
        <title>Araport11: a complete reannotation of the Arabidopsis thaliana reference genome.</title>
        <authorList>
            <person name="Cheng C.Y."/>
            <person name="Krishnakumar V."/>
            <person name="Chan A.P."/>
            <person name="Thibaud-Nissen F."/>
            <person name="Schobel S."/>
            <person name="Town C.D."/>
        </authorList>
    </citation>
    <scope>GENOME REANNOTATION</scope>
    <source>
        <strain>cv. Columbia</strain>
    </source>
</reference>
<reference key="3">
    <citation type="journal article" date="2010" name="Biosci. Biotechnol. Biochem.">
        <title>The contribution of Arabidopsis homologs of L-gulono-1,4-lactone oxidase to the biosynthesis of ascorbic acid.</title>
        <authorList>
            <person name="Maruta T."/>
            <person name="Ichikawa Y."/>
            <person name="Mieda T."/>
            <person name="Takeda T."/>
            <person name="Tamoi M."/>
            <person name="Yabuta Y."/>
            <person name="Ishikawa T."/>
            <person name="Shigeoka S."/>
        </authorList>
    </citation>
    <scope>FUNCTION</scope>
</reference>
<comment type="function">
    <text evidence="6">May be involved in the biosynthesis of ascorbic acid.</text>
</comment>
<comment type="catalytic activity">
    <reaction evidence="5">
        <text>L-gulono-1,4-lactone + O2 = L-ascorbate + H2O2 + H(+)</text>
        <dbReference type="Rhea" id="RHEA:32363"/>
        <dbReference type="ChEBI" id="CHEBI:15378"/>
        <dbReference type="ChEBI" id="CHEBI:15379"/>
        <dbReference type="ChEBI" id="CHEBI:16240"/>
        <dbReference type="ChEBI" id="CHEBI:17587"/>
        <dbReference type="ChEBI" id="CHEBI:38290"/>
        <dbReference type="EC" id="1.1.3.8"/>
    </reaction>
</comment>
<comment type="cofactor">
    <cofactor evidence="1">
        <name>FAD</name>
        <dbReference type="ChEBI" id="CHEBI:57692"/>
    </cofactor>
</comment>
<comment type="pathway">
    <text evidence="6">Cofactor biosynthesis; L-ascorbate biosynthesis.</text>
</comment>
<comment type="similarity">
    <text evidence="5">Belongs to the oxygen-dependent FAD-linked oxidoreductase family.</text>
</comment>
<accession>O81032</accession>
<proteinExistence type="inferred from homology"/>
<organism evidence="9">
    <name type="scientific">Arabidopsis thaliana</name>
    <name type="common">Mouse-ear cress</name>
    <dbReference type="NCBI Taxonomy" id="3702"/>
    <lineage>
        <taxon>Eukaryota</taxon>
        <taxon>Viridiplantae</taxon>
        <taxon>Streptophyta</taxon>
        <taxon>Embryophyta</taxon>
        <taxon>Tracheophyta</taxon>
        <taxon>Spermatophyta</taxon>
        <taxon>Magnoliopsida</taxon>
        <taxon>eudicotyledons</taxon>
        <taxon>Gunneridae</taxon>
        <taxon>Pentapetalae</taxon>
        <taxon>rosids</taxon>
        <taxon>malvids</taxon>
        <taxon>Brassicales</taxon>
        <taxon>Brassicaceae</taxon>
        <taxon>Camelineae</taxon>
        <taxon>Arabidopsis</taxon>
    </lineage>
</organism>
<sequence length="603" mass="66282">MAFTSSPSYGSLNAAFWRTIFVVHCISTLVFTTISTPPEDPVKCVSGNTNCTVTNSYGAFPDRSTCRAANVAYPTTEAELISVVAAATKAGRKMRVTTRYSHSITKLACTDGTDGLLISTKFLNHTVRTDATAMTLTVESGVTLRQLIAEAAKVGLALPYAPYWWGLTVGGMMGTGAHGSSLWGKGSAVHDYVTEIRIVSPGSVNDGFAKVRVLRETTTPKEFNAAKVSLGVLGVISQVTLKLQPMFKRSLRYVMRNDSDFGDQAVTFGMKHEFADFIWLPSQGKVVYRMDDRVAVNTSGNGLLDFMPFRSQLSAALAIIRSSEETQERFRDANGKCAGATLITSTLFATSYGLTNNGMIFTGYPVIGSQNRMMSSGSCLDSLHDGLITACPWDSRIKSEFFHQTTFSIPLTQVKSFINDIKSLVKIESKSLCVLELYDGILMRYVTSSPAYLGKETEALDFDLTYYRAKDPLSPRLYEDFIEEIEQIALFKYNALPHWGKNRNLAFDGVIKKYKNVPAFLKVKESYDPMGLFSSEWTDQILGIKGNVTIIKDGCALEGLCVCSEDAHCAPTKGYFCRPGKVYKEARVCTRADDISVIQSLSY</sequence>
<protein>
    <recommendedName>
        <fullName evidence="4">Probable L-gulonolactone oxidase 6</fullName>
        <shortName evidence="4">AtGulLO6</shortName>
        <ecNumber evidence="5">1.1.3.8</ecNumber>
    </recommendedName>
</protein>
<gene>
    <name evidence="4" type="primary">GULLO6</name>
    <name evidence="7" type="ordered locus">At2g46760</name>
    <name evidence="8" type="ORF">F19D11.4</name>
</gene>
<keyword id="KW-0060">Ascorbate biosynthesis</keyword>
<keyword id="KW-0274">FAD</keyword>
<keyword id="KW-0285">Flavoprotein</keyword>
<keyword id="KW-0560">Oxidoreductase</keyword>
<keyword id="KW-1185">Reference proteome</keyword>
<keyword id="KW-0732">Signal</keyword>
<evidence type="ECO:0000250" key="1">
    <source>
        <dbReference type="UniProtKB" id="P58710"/>
    </source>
</evidence>
<evidence type="ECO:0000255" key="2"/>
<evidence type="ECO:0000255" key="3">
    <source>
        <dbReference type="PROSITE-ProRule" id="PRU00718"/>
    </source>
</evidence>
<evidence type="ECO:0000303" key="4">
    <source>
    </source>
</evidence>
<evidence type="ECO:0000305" key="5"/>
<evidence type="ECO:0000305" key="6">
    <source>
    </source>
</evidence>
<evidence type="ECO:0000312" key="7">
    <source>
        <dbReference type="Araport" id="AT2G46760"/>
    </source>
</evidence>
<evidence type="ECO:0000312" key="8">
    <source>
        <dbReference type="EMBL" id="AAC33495.1"/>
    </source>
</evidence>
<evidence type="ECO:0000312" key="9">
    <source>
        <dbReference type="Proteomes" id="UP000006548"/>
    </source>
</evidence>
<dbReference type="EC" id="1.1.3.8" evidence="5"/>
<dbReference type="EMBL" id="AC005310">
    <property type="protein sequence ID" value="AAC33495.1"/>
    <property type="molecule type" value="Genomic_DNA"/>
</dbReference>
<dbReference type="EMBL" id="CP002685">
    <property type="protein sequence ID" value="AEC10749.1"/>
    <property type="molecule type" value="Genomic_DNA"/>
</dbReference>
<dbReference type="PIR" id="T02677">
    <property type="entry name" value="T02677"/>
</dbReference>
<dbReference type="RefSeq" id="NP_182199.1">
    <property type="nucleotide sequence ID" value="NM_130242.2"/>
</dbReference>
<dbReference type="SMR" id="O81032"/>
<dbReference type="FunCoup" id="O81032">
    <property type="interactions" value="267"/>
</dbReference>
<dbReference type="STRING" id="3702.O81032"/>
<dbReference type="PaxDb" id="3702-AT2G46760.1"/>
<dbReference type="ProteomicsDB" id="224782"/>
<dbReference type="EnsemblPlants" id="AT2G46760.1">
    <property type="protein sequence ID" value="AT2G46760.1"/>
    <property type="gene ID" value="AT2G46760"/>
</dbReference>
<dbReference type="GeneID" id="819289"/>
<dbReference type="Gramene" id="AT2G46760.1">
    <property type="protein sequence ID" value="AT2G46760.1"/>
    <property type="gene ID" value="AT2G46760"/>
</dbReference>
<dbReference type="KEGG" id="ath:AT2G46760"/>
<dbReference type="Araport" id="AT2G46760"/>
<dbReference type="TAIR" id="AT2G46760">
    <property type="gene designation" value="GULLO6"/>
</dbReference>
<dbReference type="eggNOG" id="KOG4730">
    <property type="taxonomic scope" value="Eukaryota"/>
</dbReference>
<dbReference type="HOGENOM" id="CLU_019762_2_0_1"/>
<dbReference type="InParanoid" id="O81032"/>
<dbReference type="OMA" id="YCHPGRC"/>
<dbReference type="OrthoDB" id="610608at2759"/>
<dbReference type="PhylomeDB" id="O81032"/>
<dbReference type="UniPathway" id="UPA00132"/>
<dbReference type="PRO" id="PR:O81032"/>
<dbReference type="Proteomes" id="UP000006548">
    <property type="component" value="Chromosome 2"/>
</dbReference>
<dbReference type="ExpressionAtlas" id="O81032">
    <property type="expression patterns" value="baseline and differential"/>
</dbReference>
<dbReference type="GO" id="GO:0016020">
    <property type="term" value="C:membrane"/>
    <property type="evidence" value="ECO:0007669"/>
    <property type="project" value="InterPro"/>
</dbReference>
<dbReference type="GO" id="GO:0003885">
    <property type="term" value="F:D-arabinono-1,4-lactone oxidase activity"/>
    <property type="evidence" value="ECO:0007669"/>
    <property type="project" value="InterPro"/>
</dbReference>
<dbReference type="GO" id="GO:0071949">
    <property type="term" value="F:FAD binding"/>
    <property type="evidence" value="ECO:0007669"/>
    <property type="project" value="InterPro"/>
</dbReference>
<dbReference type="GO" id="GO:0050105">
    <property type="term" value="F:L-gulonolactone oxidase activity"/>
    <property type="evidence" value="ECO:0007669"/>
    <property type="project" value="UniProtKB-EC"/>
</dbReference>
<dbReference type="GO" id="GO:0019853">
    <property type="term" value="P:L-ascorbic acid biosynthetic process"/>
    <property type="evidence" value="ECO:0007669"/>
    <property type="project" value="UniProtKB-UniPathway"/>
</dbReference>
<dbReference type="FunFam" id="3.30.70.2520:FF:000003">
    <property type="entry name" value="L-gulonolactone oxidase 2"/>
    <property type="match status" value="1"/>
</dbReference>
<dbReference type="FunFam" id="3.30.465.10:FF:000033">
    <property type="entry name" value="L-gulonolactone oxidase 5"/>
    <property type="match status" value="1"/>
</dbReference>
<dbReference type="Gene3D" id="3.30.465.10">
    <property type="match status" value="1"/>
</dbReference>
<dbReference type="Gene3D" id="3.30.70.2520">
    <property type="match status" value="1"/>
</dbReference>
<dbReference type="Gene3D" id="3.30.43.10">
    <property type="entry name" value="Uridine Diphospho-n-acetylenolpyruvylglucosamine Reductase, domain 2"/>
    <property type="match status" value="1"/>
</dbReference>
<dbReference type="InterPro" id="IPR007173">
    <property type="entry name" value="ALO_C"/>
</dbReference>
<dbReference type="InterPro" id="IPR016166">
    <property type="entry name" value="FAD-bd_PCMH"/>
</dbReference>
<dbReference type="InterPro" id="IPR036318">
    <property type="entry name" value="FAD-bd_PCMH-like_sf"/>
</dbReference>
<dbReference type="InterPro" id="IPR016167">
    <property type="entry name" value="FAD-bd_PCMH_sub1"/>
</dbReference>
<dbReference type="InterPro" id="IPR016169">
    <property type="entry name" value="FAD-bd_PCMH_sub2"/>
</dbReference>
<dbReference type="InterPro" id="IPR050432">
    <property type="entry name" value="FAD-linked_Oxidoreductases_BP"/>
</dbReference>
<dbReference type="InterPro" id="IPR055154">
    <property type="entry name" value="GULLO2-like_C"/>
</dbReference>
<dbReference type="InterPro" id="IPR010030">
    <property type="entry name" value="GULO_Plant"/>
</dbReference>
<dbReference type="InterPro" id="IPR006094">
    <property type="entry name" value="Oxid_FAD_bind_N"/>
</dbReference>
<dbReference type="NCBIfam" id="TIGR01677">
    <property type="entry name" value="pln_FAD_oxido"/>
    <property type="match status" value="1"/>
</dbReference>
<dbReference type="PANTHER" id="PTHR13878">
    <property type="entry name" value="GULONOLACTONE OXIDASE"/>
    <property type="match status" value="1"/>
</dbReference>
<dbReference type="PANTHER" id="PTHR13878:SF160">
    <property type="entry name" value="L-GULONOLACTONE OXIDASE 6-RELATED"/>
    <property type="match status" value="1"/>
</dbReference>
<dbReference type="Pfam" id="PF04030">
    <property type="entry name" value="ALO"/>
    <property type="match status" value="1"/>
</dbReference>
<dbReference type="Pfam" id="PF01565">
    <property type="entry name" value="FAD_binding_4"/>
    <property type="match status" value="1"/>
</dbReference>
<dbReference type="Pfam" id="PF22906">
    <property type="entry name" value="GULLO2-like_3rd"/>
    <property type="match status" value="1"/>
</dbReference>
<dbReference type="SUPFAM" id="SSF56176">
    <property type="entry name" value="FAD-binding/transporter-associated domain-like"/>
    <property type="match status" value="1"/>
</dbReference>
<dbReference type="PROSITE" id="PS51387">
    <property type="entry name" value="FAD_PCMH"/>
    <property type="match status" value="1"/>
</dbReference>